<name>Y602_HAMD5</name>
<reference key="1">
    <citation type="journal article" date="2009" name="Proc. Natl. Acad. Sci. U.S.A.">
        <title>Hamiltonella defensa, genome evolution of protective bacterial endosymbiont from pathogenic ancestors.</title>
        <authorList>
            <person name="Degnan P.H."/>
            <person name="Yu Y."/>
            <person name="Sisneros N."/>
            <person name="Wing R.A."/>
            <person name="Moran N.A."/>
        </authorList>
    </citation>
    <scope>NUCLEOTIDE SEQUENCE [LARGE SCALE GENOMIC DNA]</scope>
    <source>
        <strain>5AT</strain>
    </source>
</reference>
<evidence type="ECO:0000255" key="1">
    <source>
        <dbReference type="HAMAP-Rule" id="MF_00758"/>
    </source>
</evidence>
<organism>
    <name type="scientific">Hamiltonella defensa subsp. Acyrthosiphon pisum (strain 5AT)</name>
    <dbReference type="NCBI Taxonomy" id="572265"/>
    <lineage>
        <taxon>Bacteria</taxon>
        <taxon>Pseudomonadati</taxon>
        <taxon>Pseudomonadota</taxon>
        <taxon>Gammaproteobacteria</taxon>
        <taxon>Enterobacterales</taxon>
        <taxon>Enterobacteriaceae</taxon>
        <taxon>aphid secondary symbionts</taxon>
        <taxon>Candidatus Hamiltonella</taxon>
    </lineage>
</organism>
<feature type="chain" id="PRO_1000212871" description="UPF0301 protein HDEF_0602">
    <location>
        <begin position="1"/>
        <end position="185"/>
    </location>
</feature>
<sequence length="185" mass="20739">MNLQHHFLIAMPLLQNTYFERSVIYVCEHNENGAMGLMINQPVARFTLERLLKKLNISSVHDAGHLNKPVMSGGPLSDDRGFILHSPQSGFNSSIHVSDDTMITTSKDILKTLGTKKQPKNIMVAVGYTGWQKGQLEQELIDNVWLTTKADTEILFNTLIPNRWYEAASKLGINIFHIAQQAGHA</sequence>
<accession>C4K450</accession>
<proteinExistence type="inferred from homology"/>
<gene>
    <name type="ordered locus">HDEF_0602</name>
</gene>
<protein>
    <recommendedName>
        <fullName evidence="1">UPF0301 protein HDEF_0602</fullName>
    </recommendedName>
</protein>
<dbReference type="EMBL" id="CP001277">
    <property type="protein sequence ID" value="ACQ67343.1"/>
    <property type="molecule type" value="Genomic_DNA"/>
</dbReference>
<dbReference type="RefSeq" id="WP_015873167.1">
    <property type="nucleotide sequence ID" value="NC_012751.1"/>
</dbReference>
<dbReference type="SMR" id="C4K450"/>
<dbReference type="STRING" id="572265.HDEF_0602"/>
<dbReference type="GeneID" id="66260473"/>
<dbReference type="KEGG" id="hde:HDEF_0602"/>
<dbReference type="eggNOG" id="COG1678">
    <property type="taxonomic scope" value="Bacteria"/>
</dbReference>
<dbReference type="HOGENOM" id="CLU_057596_1_0_6"/>
<dbReference type="Proteomes" id="UP000002334">
    <property type="component" value="Chromosome"/>
</dbReference>
<dbReference type="GO" id="GO:0005829">
    <property type="term" value="C:cytosol"/>
    <property type="evidence" value="ECO:0007669"/>
    <property type="project" value="TreeGrafter"/>
</dbReference>
<dbReference type="Gene3D" id="3.40.1740.10">
    <property type="entry name" value="VC0467-like"/>
    <property type="match status" value="1"/>
</dbReference>
<dbReference type="HAMAP" id="MF_00758">
    <property type="entry name" value="UPF0301"/>
    <property type="match status" value="1"/>
</dbReference>
<dbReference type="InterPro" id="IPR003774">
    <property type="entry name" value="AlgH-like"/>
</dbReference>
<dbReference type="NCBIfam" id="NF001266">
    <property type="entry name" value="PRK00228.1-1"/>
    <property type="match status" value="1"/>
</dbReference>
<dbReference type="PANTHER" id="PTHR30327">
    <property type="entry name" value="UNCHARACTERIZED PROTEIN YQGE"/>
    <property type="match status" value="1"/>
</dbReference>
<dbReference type="PANTHER" id="PTHR30327:SF1">
    <property type="entry name" value="UPF0301 PROTEIN YQGE"/>
    <property type="match status" value="1"/>
</dbReference>
<dbReference type="Pfam" id="PF02622">
    <property type="entry name" value="DUF179"/>
    <property type="match status" value="1"/>
</dbReference>
<dbReference type="SUPFAM" id="SSF143456">
    <property type="entry name" value="VC0467-like"/>
    <property type="match status" value="1"/>
</dbReference>
<comment type="similarity">
    <text evidence="1">Belongs to the UPF0301 (AlgH) family.</text>
</comment>